<gene>
    <name type="ordered locus">Adeh_4231</name>
</gene>
<keyword id="KW-0227">DNA damage</keyword>
<keyword id="KW-0234">DNA repair</keyword>
<keyword id="KW-0378">Hydrolase</keyword>
<keyword id="KW-1185">Reference proteome</keyword>
<reference key="1">
    <citation type="submission" date="2006-01" db="EMBL/GenBank/DDBJ databases">
        <title>Complete sequence of Anaeromyxobacter dehalogenans 2CP-C.</title>
        <authorList>
            <person name="Copeland A."/>
            <person name="Lucas S."/>
            <person name="Lapidus A."/>
            <person name="Barry K."/>
            <person name="Detter J.C."/>
            <person name="Glavina T."/>
            <person name="Hammon N."/>
            <person name="Israni S."/>
            <person name="Pitluck S."/>
            <person name="Brettin T."/>
            <person name="Bruce D."/>
            <person name="Han C."/>
            <person name="Tapia R."/>
            <person name="Gilna P."/>
            <person name="Kiss H."/>
            <person name="Schmutz J."/>
            <person name="Larimer F."/>
            <person name="Land M."/>
            <person name="Kyrpides N."/>
            <person name="Anderson I."/>
            <person name="Sanford R.A."/>
            <person name="Ritalahti K.M."/>
            <person name="Thomas H.S."/>
            <person name="Kirby J.R."/>
            <person name="Zhulin I.B."/>
            <person name="Loeffler F.E."/>
            <person name="Richardson P."/>
        </authorList>
    </citation>
    <scope>NUCLEOTIDE SEQUENCE [LARGE SCALE GENOMIC DNA]</scope>
    <source>
        <strain>2CP-C</strain>
    </source>
</reference>
<evidence type="ECO:0000255" key="1">
    <source>
        <dbReference type="HAMAP-Rule" id="MF_00527"/>
    </source>
</evidence>
<evidence type="ECO:0000256" key="2">
    <source>
        <dbReference type="SAM" id="MobiDB-lite"/>
    </source>
</evidence>
<dbReference type="EC" id="3.2.2.-" evidence="1"/>
<dbReference type="EMBL" id="CP000251">
    <property type="protein sequence ID" value="ABC83995.1"/>
    <property type="molecule type" value="Genomic_DNA"/>
</dbReference>
<dbReference type="RefSeq" id="WP_011423277.1">
    <property type="nucleotide sequence ID" value="NC_007760.1"/>
</dbReference>
<dbReference type="SMR" id="Q2IHD7"/>
<dbReference type="STRING" id="290397.Adeh_4231"/>
<dbReference type="KEGG" id="ade:Adeh_4231"/>
<dbReference type="eggNOG" id="COG2094">
    <property type="taxonomic scope" value="Bacteria"/>
</dbReference>
<dbReference type="HOGENOM" id="CLU_060471_4_1_7"/>
<dbReference type="OrthoDB" id="9794313at2"/>
<dbReference type="Proteomes" id="UP000001935">
    <property type="component" value="Chromosome"/>
</dbReference>
<dbReference type="GO" id="GO:0003905">
    <property type="term" value="F:alkylbase DNA N-glycosylase activity"/>
    <property type="evidence" value="ECO:0007669"/>
    <property type="project" value="InterPro"/>
</dbReference>
<dbReference type="GO" id="GO:0003677">
    <property type="term" value="F:DNA binding"/>
    <property type="evidence" value="ECO:0007669"/>
    <property type="project" value="InterPro"/>
</dbReference>
<dbReference type="GO" id="GO:0006284">
    <property type="term" value="P:base-excision repair"/>
    <property type="evidence" value="ECO:0007669"/>
    <property type="project" value="InterPro"/>
</dbReference>
<dbReference type="CDD" id="cd00540">
    <property type="entry name" value="AAG"/>
    <property type="match status" value="1"/>
</dbReference>
<dbReference type="FunFam" id="3.10.300.10:FF:000001">
    <property type="entry name" value="Putative 3-methyladenine DNA glycosylase"/>
    <property type="match status" value="1"/>
</dbReference>
<dbReference type="Gene3D" id="3.10.300.10">
    <property type="entry name" value="Methylpurine-DNA glycosylase (MPG)"/>
    <property type="match status" value="1"/>
</dbReference>
<dbReference type="HAMAP" id="MF_00527">
    <property type="entry name" value="3MGH"/>
    <property type="match status" value="1"/>
</dbReference>
<dbReference type="InterPro" id="IPR011034">
    <property type="entry name" value="Formyl_transferase-like_C_sf"/>
</dbReference>
<dbReference type="InterPro" id="IPR003180">
    <property type="entry name" value="MPG"/>
</dbReference>
<dbReference type="InterPro" id="IPR036995">
    <property type="entry name" value="MPG_sf"/>
</dbReference>
<dbReference type="NCBIfam" id="TIGR00567">
    <property type="entry name" value="3mg"/>
    <property type="match status" value="1"/>
</dbReference>
<dbReference type="PANTHER" id="PTHR10429">
    <property type="entry name" value="DNA-3-METHYLADENINE GLYCOSYLASE"/>
    <property type="match status" value="1"/>
</dbReference>
<dbReference type="PANTHER" id="PTHR10429:SF0">
    <property type="entry name" value="DNA-3-METHYLADENINE GLYCOSYLASE"/>
    <property type="match status" value="1"/>
</dbReference>
<dbReference type="Pfam" id="PF02245">
    <property type="entry name" value="Pur_DNA_glyco"/>
    <property type="match status" value="1"/>
</dbReference>
<dbReference type="SUPFAM" id="SSF50486">
    <property type="entry name" value="FMT C-terminal domain-like"/>
    <property type="match status" value="1"/>
</dbReference>
<proteinExistence type="inferred from homology"/>
<accession>Q2IHD7</accession>
<organism>
    <name type="scientific">Anaeromyxobacter dehalogenans (strain 2CP-C)</name>
    <dbReference type="NCBI Taxonomy" id="290397"/>
    <lineage>
        <taxon>Bacteria</taxon>
        <taxon>Pseudomonadati</taxon>
        <taxon>Myxococcota</taxon>
        <taxon>Myxococcia</taxon>
        <taxon>Myxococcales</taxon>
        <taxon>Cystobacterineae</taxon>
        <taxon>Anaeromyxobacteraceae</taxon>
        <taxon>Anaeromyxobacter</taxon>
    </lineage>
</organism>
<name>3MGH_ANADE</name>
<comment type="similarity">
    <text evidence="1">Belongs to the DNA glycosylase MPG family.</text>
</comment>
<feature type="chain" id="PRO_0000264993" description="Putative 3-methyladenine DNA glycosylase">
    <location>
        <begin position="1"/>
        <end position="207"/>
    </location>
</feature>
<feature type="region of interest" description="Disordered" evidence="2">
    <location>
        <begin position="182"/>
        <end position="207"/>
    </location>
</feature>
<feature type="compositionally biased region" description="Low complexity" evidence="2">
    <location>
        <begin position="182"/>
        <end position="193"/>
    </location>
</feature>
<feature type="compositionally biased region" description="Basic residues" evidence="2">
    <location>
        <begin position="198"/>
        <end position="207"/>
    </location>
</feature>
<sequence length="207" mass="22290">MKLPQAFYARDTRTVARALLGKVLVHLDGGVRRAARIVETEAYHGPDDRASHARAGPTPRAAIMFGPPGRAYVYLIYGTSHCMNVVTGPEGFPSAVLIRAAEPIEGCLHSTRGPGNLCRALAIRREHDNGRDLWGEELFIEDAPAPREAVVTGPRVNVGYAGPWAARPWRFALRGSAWVSRPAPAGARAARAPAPAPRPRRPRGSGP</sequence>
<protein>
    <recommendedName>
        <fullName evidence="1">Putative 3-methyladenine DNA glycosylase</fullName>
        <ecNumber evidence="1">3.2.2.-</ecNumber>
    </recommendedName>
</protein>